<feature type="chain" id="PRO_0000113362" description="Malate dehydrogenase">
    <location>
        <begin position="1"/>
        <end position="326"/>
    </location>
</feature>
<feature type="active site" description="Proton acceptor" evidence="1">
    <location>
        <position position="188"/>
    </location>
</feature>
<feature type="binding site" evidence="1">
    <location>
        <begin position="12"/>
        <end position="18"/>
    </location>
    <ligand>
        <name>NAD(+)</name>
        <dbReference type="ChEBI" id="CHEBI:57540"/>
    </ligand>
</feature>
<feature type="binding site" evidence="1">
    <location>
        <position position="93"/>
    </location>
    <ligand>
        <name>substrate</name>
    </ligand>
</feature>
<feature type="binding site" evidence="1">
    <location>
        <position position="99"/>
    </location>
    <ligand>
        <name>substrate</name>
    </ligand>
</feature>
<feature type="binding site" evidence="1">
    <location>
        <position position="106"/>
    </location>
    <ligand>
        <name>NAD(+)</name>
        <dbReference type="ChEBI" id="CHEBI:57540"/>
    </ligand>
</feature>
<feature type="binding site" evidence="1">
    <location>
        <position position="113"/>
    </location>
    <ligand>
        <name>NAD(+)</name>
        <dbReference type="ChEBI" id="CHEBI:57540"/>
    </ligand>
</feature>
<feature type="binding site" evidence="1">
    <location>
        <begin position="130"/>
        <end position="132"/>
    </location>
    <ligand>
        <name>NAD(+)</name>
        <dbReference type="ChEBI" id="CHEBI:57540"/>
    </ligand>
</feature>
<feature type="binding site" evidence="1">
    <location>
        <position position="132"/>
    </location>
    <ligand>
        <name>substrate</name>
    </ligand>
</feature>
<feature type="binding site" evidence="1">
    <location>
        <position position="163"/>
    </location>
    <ligand>
        <name>substrate</name>
    </ligand>
</feature>
<evidence type="ECO:0000255" key="1">
    <source>
        <dbReference type="HAMAP-Rule" id="MF_01517"/>
    </source>
</evidence>
<accession>P61974</accession>
<reference key="1">
    <citation type="journal article" date="2003" name="Nucleic Acids Res.">
        <title>The complete genome sequence and analysis of Corynebacterium diphtheriae NCTC13129.</title>
        <authorList>
            <person name="Cerdeno-Tarraga A.-M."/>
            <person name="Efstratiou A."/>
            <person name="Dover L.G."/>
            <person name="Holden M.T.G."/>
            <person name="Pallen M.J."/>
            <person name="Bentley S.D."/>
            <person name="Besra G.S."/>
            <person name="Churcher C.M."/>
            <person name="James K.D."/>
            <person name="De Zoysa A."/>
            <person name="Chillingworth T."/>
            <person name="Cronin A."/>
            <person name="Dowd L."/>
            <person name="Feltwell T."/>
            <person name="Hamlin N."/>
            <person name="Holroyd S."/>
            <person name="Jagels K."/>
            <person name="Moule S."/>
            <person name="Quail M.A."/>
            <person name="Rabbinowitsch E."/>
            <person name="Rutherford K.M."/>
            <person name="Thomson N.R."/>
            <person name="Unwin L."/>
            <person name="Whitehead S."/>
            <person name="Barrell B.G."/>
            <person name="Parkhill J."/>
        </authorList>
    </citation>
    <scope>NUCLEOTIDE SEQUENCE [LARGE SCALE GENOMIC DNA]</scope>
    <source>
        <strain>ATCC 700971 / NCTC 13129 / Biotype gravis</strain>
    </source>
</reference>
<dbReference type="EC" id="1.1.1.37" evidence="1"/>
<dbReference type="EMBL" id="BX248359">
    <property type="protein sequence ID" value="CAE50317.1"/>
    <property type="molecule type" value="Genomic_DNA"/>
</dbReference>
<dbReference type="RefSeq" id="WP_010935335.1">
    <property type="nucleotide sequence ID" value="NC_002935.2"/>
</dbReference>
<dbReference type="SMR" id="P61974"/>
<dbReference type="STRING" id="257309.DIP1787"/>
<dbReference type="KEGG" id="cdi:DIP1787"/>
<dbReference type="HOGENOM" id="CLU_040727_2_0_11"/>
<dbReference type="Proteomes" id="UP000002198">
    <property type="component" value="Chromosome"/>
</dbReference>
<dbReference type="GO" id="GO:0030060">
    <property type="term" value="F:L-malate dehydrogenase (NAD+) activity"/>
    <property type="evidence" value="ECO:0007669"/>
    <property type="project" value="UniProtKB-UniRule"/>
</dbReference>
<dbReference type="GO" id="GO:0006108">
    <property type="term" value="P:malate metabolic process"/>
    <property type="evidence" value="ECO:0007669"/>
    <property type="project" value="InterPro"/>
</dbReference>
<dbReference type="GO" id="GO:0006099">
    <property type="term" value="P:tricarboxylic acid cycle"/>
    <property type="evidence" value="ECO:0007669"/>
    <property type="project" value="UniProtKB-UniRule"/>
</dbReference>
<dbReference type="CDD" id="cd01338">
    <property type="entry name" value="MDH_chloroplast-like"/>
    <property type="match status" value="1"/>
</dbReference>
<dbReference type="FunFam" id="3.40.50.720:FF:000010">
    <property type="entry name" value="Malate dehydrogenase"/>
    <property type="match status" value="1"/>
</dbReference>
<dbReference type="FunFam" id="3.90.110.10:FF:000002">
    <property type="entry name" value="Malate dehydrogenase"/>
    <property type="match status" value="1"/>
</dbReference>
<dbReference type="Gene3D" id="3.90.110.10">
    <property type="entry name" value="Lactate dehydrogenase/glycoside hydrolase, family 4, C-terminal"/>
    <property type="match status" value="1"/>
</dbReference>
<dbReference type="Gene3D" id="3.40.50.720">
    <property type="entry name" value="NAD(P)-binding Rossmann-like Domain"/>
    <property type="match status" value="1"/>
</dbReference>
<dbReference type="HAMAP" id="MF_01517">
    <property type="entry name" value="Malate_dehydrog_2"/>
    <property type="match status" value="1"/>
</dbReference>
<dbReference type="InterPro" id="IPR001557">
    <property type="entry name" value="L-lactate/malate_DH"/>
</dbReference>
<dbReference type="InterPro" id="IPR022383">
    <property type="entry name" value="Lactate/malate_DH_C"/>
</dbReference>
<dbReference type="InterPro" id="IPR001236">
    <property type="entry name" value="Lactate/malate_DH_N"/>
</dbReference>
<dbReference type="InterPro" id="IPR015955">
    <property type="entry name" value="Lactate_DH/Glyco_Ohase_4_C"/>
</dbReference>
<dbReference type="InterPro" id="IPR010945">
    <property type="entry name" value="Malate_DH_type2"/>
</dbReference>
<dbReference type="InterPro" id="IPR036291">
    <property type="entry name" value="NAD(P)-bd_dom_sf"/>
</dbReference>
<dbReference type="NCBIfam" id="TIGR01759">
    <property type="entry name" value="MalateDH-SF1"/>
    <property type="match status" value="1"/>
</dbReference>
<dbReference type="NCBIfam" id="NF003916">
    <property type="entry name" value="PRK05442.1"/>
    <property type="match status" value="1"/>
</dbReference>
<dbReference type="PANTHER" id="PTHR23382">
    <property type="entry name" value="MALATE DEHYDROGENASE"/>
    <property type="match status" value="1"/>
</dbReference>
<dbReference type="Pfam" id="PF02866">
    <property type="entry name" value="Ldh_1_C"/>
    <property type="match status" value="1"/>
</dbReference>
<dbReference type="Pfam" id="PF00056">
    <property type="entry name" value="Ldh_1_N"/>
    <property type="match status" value="1"/>
</dbReference>
<dbReference type="PIRSF" id="PIRSF000102">
    <property type="entry name" value="Lac_mal_DH"/>
    <property type="match status" value="1"/>
</dbReference>
<dbReference type="SUPFAM" id="SSF56327">
    <property type="entry name" value="LDH C-terminal domain-like"/>
    <property type="match status" value="1"/>
</dbReference>
<dbReference type="SUPFAM" id="SSF51735">
    <property type="entry name" value="NAD(P)-binding Rossmann-fold domains"/>
    <property type="match status" value="1"/>
</dbReference>
<gene>
    <name evidence="1" type="primary">mdh</name>
    <name type="ordered locus">DIP1787</name>
</gene>
<sequence>MTESVKKIAVTGAAGQIAYSLLWRIANGDVYGKNTPVELQLLEIPQAIGGAEGVAMELLDSAFPLLKNIVVTDKAEVAFDGTNAAFLVGAKPRGKGEERADLLTANGKIFGPQGKALNDNAADDIRVLVVGNPANTNALIAQHAAKDIPADRFNAMMRLDHNRGIAQLSEKLGRDKNDIEKFVVWGNHSAGQFPDITYATIGGEAISGLVDHDWYTGEFIPRVAKRGAEIIEVRGKSSAASAASSAIDHMHDWINGTDGQWRTAAIPSDGSYGVPEGLIFGFPTISEDGQWKIVQDLELSDFQKDGIARNVTELEEEREAVKDLLG</sequence>
<comment type="function">
    <text evidence="1">Catalyzes the reversible oxidation of malate to oxaloacetate.</text>
</comment>
<comment type="catalytic activity">
    <reaction evidence="1">
        <text>(S)-malate + NAD(+) = oxaloacetate + NADH + H(+)</text>
        <dbReference type="Rhea" id="RHEA:21432"/>
        <dbReference type="ChEBI" id="CHEBI:15378"/>
        <dbReference type="ChEBI" id="CHEBI:15589"/>
        <dbReference type="ChEBI" id="CHEBI:16452"/>
        <dbReference type="ChEBI" id="CHEBI:57540"/>
        <dbReference type="ChEBI" id="CHEBI:57945"/>
        <dbReference type="EC" id="1.1.1.37"/>
    </reaction>
</comment>
<comment type="similarity">
    <text evidence="1">Belongs to the LDH/MDH superfamily. MDH type 2 family.</text>
</comment>
<keyword id="KW-0520">NAD</keyword>
<keyword id="KW-0560">Oxidoreductase</keyword>
<keyword id="KW-1185">Reference proteome</keyword>
<keyword id="KW-0816">Tricarboxylic acid cycle</keyword>
<proteinExistence type="inferred from homology"/>
<organism>
    <name type="scientific">Corynebacterium diphtheriae (strain ATCC 700971 / NCTC 13129 / Biotype gravis)</name>
    <dbReference type="NCBI Taxonomy" id="257309"/>
    <lineage>
        <taxon>Bacteria</taxon>
        <taxon>Bacillati</taxon>
        <taxon>Actinomycetota</taxon>
        <taxon>Actinomycetes</taxon>
        <taxon>Mycobacteriales</taxon>
        <taxon>Corynebacteriaceae</taxon>
        <taxon>Corynebacterium</taxon>
    </lineage>
</organism>
<protein>
    <recommendedName>
        <fullName evidence="1">Malate dehydrogenase</fullName>
        <ecNumber evidence="1">1.1.1.37</ecNumber>
    </recommendedName>
</protein>
<name>MDH_CORDI</name>